<name>TRUA_ACIET</name>
<dbReference type="EC" id="5.4.99.12" evidence="1"/>
<dbReference type="EMBL" id="CP001392">
    <property type="protein sequence ID" value="ACM34025.1"/>
    <property type="molecule type" value="Genomic_DNA"/>
</dbReference>
<dbReference type="RefSeq" id="WP_015913945.1">
    <property type="nucleotide sequence ID" value="NC_011992.1"/>
</dbReference>
<dbReference type="SMR" id="B9MDL6"/>
<dbReference type="KEGG" id="dia:Dtpsy_2590"/>
<dbReference type="eggNOG" id="COG0101">
    <property type="taxonomic scope" value="Bacteria"/>
</dbReference>
<dbReference type="HOGENOM" id="CLU_014673_0_2_4"/>
<dbReference type="Proteomes" id="UP000000450">
    <property type="component" value="Chromosome"/>
</dbReference>
<dbReference type="GO" id="GO:0003723">
    <property type="term" value="F:RNA binding"/>
    <property type="evidence" value="ECO:0007669"/>
    <property type="project" value="InterPro"/>
</dbReference>
<dbReference type="GO" id="GO:0160147">
    <property type="term" value="F:tRNA pseudouridine(38-40) synthase activity"/>
    <property type="evidence" value="ECO:0007669"/>
    <property type="project" value="UniProtKB-EC"/>
</dbReference>
<dbReference type="GO" id="GO:0031119">
    <property type="term" value="P:tRNA pseudouridine synthesis"/>
    <property type="evidence" value="ECO:0007669"/>
    <property type="project" value="UniProtKB-UniRule"/>
</dbReference>
<dbReference type="CDD" id="cd02570">
    <property type="entry name" value="PseudoU_synth_EcTruA"/>
    <property type="match status" value="1"/>
</dbReference>
<dbReference type="FunFam" id="3.30.70.580:FF:000001">
    <property type="entry name" value="tRNA pseudouridine synthase A"/>
    <property type="match status" value="1"/>
</dbReference>
<dbReference type="Gene3D" id="3.30.70.660">
    <property type="entry name" value="Pseudouridine synthase I, catalytic domain, C-terminal subdomain"/>
    <property type="match status" value="1"/>
</dbReference>
<dbReference type="Gene3D" id="3.30.70.580">
    <property type="entry name" value="Pseudouridine synthase I, catalytic domain, N-terminal subdomain"/>
    <property type="match status" value="1"/>
</dbReference>
<dbReference type="HAMAP" id="MF_00171">
    <property type="entry name" value="TruA"/>
    <property type="match status" value="1"/>
</dbReference>
<dbReference type="InterPro" id="IPR020103">
    <property type="entry name" value="PsdUridine_synth_cat_dom_sf"/>
</dbReference>
<dbReference type="InterPro" id="IPR001406">
    <property type="entry name" value="PsdUridine_synth_TruA"/>
</dbReference>
<dbReference type="InterPro" id="IPR020097">
    <property type="entry name" value="PsdUridine_synth_TruA_a/b_dom"/>
</dbReference>
<dbReference type="InterPro" id="IPR020095">
    <property type="entry name" value="PsdUridine_synth_TruA_C"/>
</dbReference>
<dbReference type="InterPro" id="IPR020094">
    <property type="entry name" value="TruA/RsuA/RluB/E/F_N"/>
</dbReference>
<dbReference type="NCBIfam" id="TIGR00071">
    <property type="entry name" value="hisT_truA"/>
    <property type="match status" value="1"/>
</dbReference>
<dbReference type="PANTHER" id="PTHR11142">
    <property type="entry name" value="PSEUDOURIDYLATE SYNTHASE"/>
    <property type="match status" value="1"/>
</dbReference>
<dbReference type="PANTHER" id="PTHR11142:SF0">
    <property type="entry name" value="TRNA PSEUDOURIDINE SYNTHASE-LIKE 1"/>
    <property type="match status" value="1"/>
</dbReference>
<dbReference type="Pfam" id="PF01416">
    <property type="entry name" value="PseudoU_synth_1"/>
    <property type="match status" value="2"/>
</dbReference>
<dbReference type="PIRSF" id="PIRSF001430">
    <property type="entry name" value="tRNA_psdUrid_synth"/>
    <property type="match status" value="1"/>
</dbReference>
<dbReference type="SUPFAM" id="SSF55120">
    <property type="entry name" value="Pseudouridine synthase"/>
    <property type="match status" value="1"/>
</dbReference>
<protein>
    <recommendedName>
        <fullName evidence="1">tRNA pseudouridine synthase A</fullName>
        <ecNumber evidence="1">5.4.99.12</ecNumber>
    </recommendedName>
    <alternativeName>
        <fullName evidence="1">tRNA pseudouridine(38-40) synthase</fullName>
    </alternativeName>
    <alternativeName>
        <fullName evidence="1">tRNA pseudouridylate synthase I</fullName>
    </alternativeName>
    <alternativeName>
        <fullName evidence="1">tRNA-uridine isomerase I</fullName>
    </alternativeName>
</protein>
<proteinExistence type="inferred from homology"/>
<comment type="function">
    <text evidence="1">Formation of pseudouridine at positions 38, 39 and 40 in the anticodon stem and loop of transfer RNAs.</text>
</comment>
<comment type="catalytic activity">
    <reaction evidence="1">
        <text>uridine(38/39/40) in tRNA = pseudouridine(38/39/40) in tRNA</text>
        <dbReference type="Rhea" id="RHEA:22376"/>
        <dbReference type="Rhea" id="RHEA-COMP:10085"/>
        <dbReference type="Rhea" id="RHEA-COMP:10087"/>
        <dbReference type="ChEBI" id="CHEBI:65314"/>
        <dbReference type="ChEBI" id="CHEBI:65315"/>
        <dbReference type="EC" id="5.4.99.12"/>
    </reaction>
</comment>
<comment type="subunit">
    <text evidence="1">Homodimer.</text>
</comment>
<comment type="similarity">
    <text evidence="1">Belongs to the tRNA pseudouridine synthase TruA family.</text>
</comment>
<keyword id="KW-0413">Isomerase</keyword>
<keyword id="KW-1185">Reference proteome</keyword>
<keyword id="KW-0819">tRNA processing</keyword>
<accession>B9MDL6</accession>
<organism>
    <name type="scientific">Acidovorax ebreus (strain TPSY)</name>
    <name type="common">Diaphorobacter sp. (strain TPSY)</name>
    <dbReference type="NCBI Taxonomy" id="535289"/>
    <lineage>
        <taxon>Bacteria</taxon>
        <taxon>Pseudomonadati</taxon>
        <taxon>Pseudomonadota</taxon>
        <taxon>Betaproteobacteria</taxon>
        <taxon>Burkholderiales</taxon>
        <taxon>Comamonadaceae</taxon>
        <taxon>Diaphorobacter</taxon>
    </lineage>
</organism>
<sequence length="274" mass="30467">MRMALGVSYNGQAYNGWQSQPSGNTVQDRLEAALGRFATQEVHTICAGRTDAGVHGLMQVVHFDTQLQRAPFSWVRGTNTFLPTDIAVQWAQPVPDAFHSRACAVARRYAYVLLQSPVRPSVDAGRVGWVFHALDEQAMHRAVQHLLGEHDFTSFRASACQAKSPVKTLHRIDITRRAPPAGESTGTHGCIPCYWRFEFEGNAFLHHMIRNIMGCIVAIGQGLYPPEWMRTVLEARSRDAAAPTFSPDGLYFQGPVYGAEWGLPTRTAAYDWLP</sequence>
<feature type="chain" id="PRO_1000194547" description="tRNA pseudouridine synthase A">
    <location>
        <begin position="1"/>
        <end position="274"/>
    </location>
</feature>
<feature type="active site" description="Nucleophile" evidence="1">
    <location>
        <position position="51"/>
    </location>
</feature>
<feature type="binding site" evidence="1">
    <location>
        <position position="109"/>
    </location>
    <ligand>
        <name>substrate</name>
    </ligand>
</feature>
<reference key="1">
    <citation type="submission" date="2009-01" db="EMBL/GenBank/DDBJ databases">
        <title>Complete sequence of Diaphorobacter sp. TPSY.</title>
        <authorList>
            <consortium name="US DOE Joint Genome Institute"/>
            <person name="Lucas S."/>
            <person name="Copeland A."/>
            <person name="Lapidus A."/>
            <person name="Glavina del Rio T."/>
            <person name="Tice H."/>
            <person name="Bruce D."/>
            <person name="Goodwin L."/>
            <person name="Pitluck S."/>
            <person name="Chertkov O."/>
            <person name="Brettin T."/>
            <person name="Detter J.C."/>
            <person name="Han C."/>
            <person name="Larimer F."/>
            <person name="Land M."/>
            <person name="Hauser L."/>
            <person name="Kyrpides N."/>
            <person name="Mikhailova N."/>
            <person name="Coates J.D."/>
        </authorList>
    </citation>
    <scope>NUCLEOTIDE SEQUENCE [LARGE SCALE GENOMIC DNA]</scope>
    <source>
        <strain>TPSY</strain>
    </source>
</reference>
<gene>
    <name evidence="1" type="primary">truA</name>
    <name type="ordered locus">Dtpsy_2590</name>
</gene>
<evidence type="ECO:0000255" key="1">
    <source>
        <dbReference type="HAMAP-Rule" id="MF_00171"/>
    </source>
</evidence>